<protein>
    <recommendedName>
        <fullName>Cytochrome b</fullName>
    </recommendedName>
    <alternativeName>
        <fullName>Complex III subunit 3</fullName>
    </alternativeName>
    <alternativeName>
        <fullName>Complex III subunit III</fullName>
    </alternativeName>
    <alternativeName>
        <fullName>Cytochrome b-c1 complex subunit 3</fullName>
    </alternativeName>
    <alternativeName>
        <fullName>Ubiquinol-cytochrome-c reductase complex cytochrome b subunit</fullName>
    </alternativeName>
</protein>
<sequence length="379" mass="42750">MTNIRKTHPLLKIMNSSFIDLPAPSNISSWWNFGSLLGACLAIQIITGLFLAMHYTADTTTAFSSVTHICRDVNQGWIIRYLHANGASMFFLCLFLHVGRGMYYGSFTLYETWNIGIILLFTVMATAFMGYVLPWGQMSFWGATVITNLLSAIPYIGTDLVEWIWGGFSVDKATLTRFFAFHFILPFIISALVMVHLLFLHETGSNNPLGTSSESDKIPFHPYYTIKDLLGLMFLLLTLTILVLFSPDLLGDPDNYMPANPLSTPPHIKPEWYFLFAYAILRSIPNKLGGVLALVMSILILAIIPILQITKQRSMMFRPLSQIMFWILTADLFTLTWIGGQPVEYPFVTIGQVASILYFSLILVIMPAVSLIENKMLKW</sequence>
<geneLocation type="mitochondrion"/>
<name>CYB_MICRA</name>
<reference key="1">
    <citation type="journal article" date="2000" name="Proc. Natl. Acad. Sci. U.S.A.">
        <title>Remarkable species diversity in Malagasy mouse lemurs (primates, Microcebus).</title>
        <authorList>
            <person name="Yoder A.D."/>
            <person name="Rasoloarison R.M."/>
            <person name="Goodman S.M."/>
            <person name="Irwin J.A."/>
            <person name="Atsalis S."/>
            <person name="Ravosa M.J."/>
            <person name="Ganzhorn J.U."/>
        </authorList>
    </citation>
    <scope>NUCLEOTIDE SEQUENCE [GENOMIC DNA]</scope>
</reference>
<evidence type="ECO:0000250" key="1"/>
<evidence type="ECO:0000250" key="2">
    <source>
        <dbReference type="UniProtKB" id="P00157"/>
    </source>
</evidence>
<evidence type="ECO:0000255" key="3">
    <source>
        <dbReference type="PROSITE-ProRule" id="PRU00967"/>
    </source>
</evidence>
<evidence type="ECO:0000255" key="4">
    <source>
        <dbReference type="PROSITE-ProRule" id="PRU00968"/>
    </source>
</evidence>
<feature type="chain" id="PRO_0000254821" description="Cytochrome b">
    <location>
        <begin position="1"/>
        <end position="379"/>
    </location>
</feature>
<feature type="transmembrane region" description="Helical" evidence="2">
    <location>
        <begin position="33"/>
        <end position="53"/>
    </location>
</feature>
<feature type="transmembrane region" description="Helical" evidence="2">
    <location>
        <begin position="77"/>
        <end position="98"/>
    </location>
</feature>
<feature type="transmembrane region" description="Helical" evidence="2">
    <location>
        <begin position="113"/>
        <end position="133"/>
    </location>
</feature>
<feature type="transmembrane region" description="Helical" evidence="2">
    <location>
        <begin position="178"/>
        <end position="198"/>
    </location>
</feature>
<feature type="transmembrane region" description="Helical" evidence="2">
    <location>
        <begin position="226"/>
        <end position="246"/>
    </location>
</feature>
<feature type="transmembrane region" description="Helical" evidence="2">
    <location>
        <begin position="288"/>
        <end position="308"/>
    </location>
</feature>
<feature type="transmembrane region" description="Helical" evidence="2">
    <location>
        <begin position="320"/>
        <end position="340"/>
    </location>
</feature>
<feature type="transmembrane region" description="Helical" evidence="2">
    <location>
        <begin position="347"/>
        <end position="367"/>
    </location>
</feature>
<feature type="binding site" description="axial binding residue" evidence="2">
    <location>
        <position position="83"/>
    </location>
    <ligand>
        <name>heme b</name>
        <dbReference type="ChEBI" id="CHEBI:60344"/>
        <label>b562</label>
    </ligand>
    <ligandPart>
        <name>Fe</name>
        <dbReference type="ChEBI" id="CHEBI:18248"/>
    </ligandPart>
</feature>
<feature type="binding site" description="axial binding residue" evidence="2">
    <location>
        <position position="97"/>
    </location>
    <ligand>
        <name>heme b</name>
        <dbReference type="ChEBI" id="CHEBI:60344"/>
        <label>b566</label>
    </ligand>
    <ligandPart>
        <name>Fe</name>
        <dbReference type="ChEBI" id="CHEBI:18248"/>
    </ligandPart>
</feature>
<feature type="binding site" description="axial binding residue" evidence="2">
    <location>
        <position position="182"/>
    </location>
    <ligand>
        <name>heme b</name>
        <dbReference type="ChEBI" id="CHEBI:60344"/>
        <label>b562</label>
    </ligand>
    <ligandPart>
        <name>Fe</name>
        <dbReference type="ChEBI" id="CHEBI:18248"/>
    </ligandPart>
</feature>
<feature type="binding site" description="axial binding residue" evidence="2">
    <location>
        <position position="196"/>
    </location>
    <ligand>
        <name>heme b</name>
        <dbReference type="ChEBI" id="CHEBI:60344"/>
        <label>b566</label>
    </ligand>
    <ligandPart>
        <name>Fe</name>
        <dbReference type="ChEBI" id="CHEBI:18248"/>
    </ligandPart>
</feature>
<feature type="binding site" evidence="2">
    <location>
        <position position="201"/>
    </location>
    <ligand>
        <name>a ubiquinone</name>
        <dbReference type="ChEBI" id="CHEBI:16389"/>
    </ligand>
</feature>
<dbReference type="EMBL" id="AF285529">
    <property type="protein sequence ID" value="AAG30674.1"/>
    <property type="molecule type" value="Genomic_DNA"/>
</dbReference>
<dbReference type="EMBL" id="AF285530">
    <property type="protein sequence ID" value="AAG30675.1"/>
    <property type="molecule type" value="Genomic_DNA"/>
</dbReference>
<dbReference type="EMBL" id="AF285531">
    <property type="protein sequence ID" value="AAG30676.1"/>
    <property type="molecule type" value="Genomic_DNA"/>
</dbReference>
<dbReference type="EMBL" id="AF285532">
    <property type="protein sequence ID" value="AAG30677.1"/>
    <property type="molecule type" value="Genomic_DNA"/>
</dbReference>
<dbReference type="SMR" id="Q9G215"/>
<dbReference type="GO" id="GO:0005743">
    <property type="term" value="C:mitochondrial inner membrane"/>
    <property type="evidence" value="ECO:0007669"/>
    <property type="project" value="UniProtKB-SubCell"/>
</dbReference>
<dbReference type="GO" id="GO:0045275">
    <property type="term" value="C:respiratory chain complex III"/>
    <property type="evidence" value="ECO:0007669"/>
    <property type="project" value="InterPro"/>
</dbReference>
<dbReference type="GO" id="GO:0046872">
    <property type="term" value="F:metal ion binding"/>
    <property type="evidence" value="ECO:0007669"/>
    <property type="project" value="UniProtKB-KW"/>
</dbReference>
<dbReference type="GO" id="GO:0008121">
    <property type="term" value="F:ubiquinol-cytochrome-c reductase activity"/>
    <property type="evidence" value="ECO:0007669"/>
    <property type="project" value="InterPro"/>
</dbReference>
<dbReference type="GO" id="GO:0006122">
    <property type="term" value="P:mitochondrial electron transport, ubiquinol to cytochrome c"/>
    <property type="evidence" value="ECO:0007669"/>
    <property type="project" value="TreeGrafter"/>
</dbReference>
<dbReference type="CDD" id="cd00290">
    <property type="entry name" value="cytochrome_b_C"/>
    <property type="match status" value="1"/>
</dbReference>
<dbReference type="CDD" id="cd00284">
    <property type="entry name" value="Cytochrome_b_N"/>
    <property type="match status" value="1"/>
</dbReference>
<dbReference type="FunFam" id="1.20.810.10:FF:000002">
    <property type="entry name" value="Cytochrome b"/>
    <property type="match status" value="1"/>
</dbReference>
<dbReference type="Gene3D" id="1.20.810.10">
    <property type="entry name" value="Cytochrome Bc1 Complex, Chain C"/>
    <property type="match status" value="1"/>
</dbReference>
<dbReference type="InterPro" id="IPR005798">
    <property type="entry name" value="Cyt_b/b6_C"/>
</dbReference>
<dbReference type="InterPro" id="IPR036150">
    <property type="entry name" value="Cyt_b/b6_C_sf"/>
</dbReference>
<dbReference type="InterPro" id="IPR005797">
    <property type="entry name" value="Cyt_b/b6_N"/>
</dbReference>
<dbReference type="InterPro" id="IPR027387">
    <property type="entry name" value="Cytb/b6-like_sf"/>
</dbReference>
<dbReference type="InterPro" id="IPR030689">
    <property type="entry name" value="Cytochrome_b"/>
</dbReference>
<dbReference type="InterPro" id="IPR048260">
    <property type="entry name" value="Cytochrome_b_C_euk/bac"/>
</dbReference>
<dbReference type="InterPro" id="IPR048259">
    <property type="entry name" value="Cytochrome_b_N_euk/bac"/>
</dbReference>
<dbReference type="InterPro" id="IPR016174">
    <property type="entry name" value="Di-haem_cyt_TM"/>
</dbReference>
<dbReference type="PANTHER" id="PTHR19271">
    <property type="entry name" value="CYTOCHROME B"/>
    <property type="match status" value="1"/>
</dbReference>
<dbReference type="PANTHER" id="PTHR19271:SF16">
    <property type="entry name" value="CYTOCHROME B"/>
    <property type="match status" value="1"/>
</dbReference>
<dbReference type="Pfam" id="PF00032">
    <property type="entry name" value="Cytochrom_B_C"/>
    <property type="match status" value="1"/>
</dbReference>
<dbReference type="Pfam" id="PF00033">
    <property type="entry name" value="Cytochrome_B"/>
    <property type="match status" value="1"/>
</dbReference>
<dbReference type="PIRSF" id="PIRSF038885">
    <property type="entry name" value="COB"/>
    <property type="match status" value="1"/>
</dbReference>
<dbReference type="SUPFAM" id="SSF81648">
    <property type="entry name" value="a domain/subunit of cytochrome bc1 complex (Ubiquinol-cytochrome c reductase)"/>
    <property type="match status" value="1"/>
</dbReference>
<dbReference type="SUPFAM" id="SSF81342">
    <property type="entry name" value="Transmembrane di-heme cytochromes"/>
    <property type="match status" value="1"/>
</dbReference>
<dbReference type="PROSITE" id="PS51003">
    <property type="entry name" value="CYTB_CTER"/>
    <property type="match status" value="1"/>
</dbReference>
<dbReference type="PROSITE" id="PS51002">
    <property type="entry name" value="CYTB_NTER"/>
    <property type="match status" value="1"/>
</dbReference>
<accession>Q9G215</accession>
<organism>
    <name type="scientific">Microcebus ravelobensis</name>
    <name type="common">Golden-brown mouse lemur</name>
    <dbReference type="NCBI Taxonomy" id="122231"/>
    <lineage>
        <taxon>Eukaryota</taxon>
        <taxon>Metazoa</taxon>
        <taxon>Chordata</taxon>
        <taxon>Craniata</taxon>
        <taxon>Vertebrata</taxon>
        <taxon>Euteleostomi</taxon>
        <taxon>Mammalia</taxon>
        <taxon>Eutheria</taxon>
        <taxon>Euarchontoglires</taxon>
        <taxon>Primates</taxon>
        <taxon>Strepsirrhini</taxon>
        <taxon>Lemuriformes</taxon>
        <taxon>Cheirogaleidae</taxon>
        <taxon>Microcebus</taxon>
    </lineage>
</organism>
<proteinExistence type="inferred from homology"/>
<keyword id="KW-0249">Electron transport</keyword>
<keyword id="KW-0349">Heme</keyword>
<keyword id="KW-0408">Iron</keyword>
<keyword id="KW-0472">Membrane</keyword>
<keyword id="KW-0479">Metal-binding</keyword>
<keyword id="KW-0496">Mitochondrion</keyword>
<keyword id="KW-0999">Mitochondrion inner membrane</keyword>
<keyword id="KW-0679">Respiratory chain</keyword>
<keyword id="KW-0812">Transmembrane</keyword>
<keyword id="KW-1133">Transmembrane helix</keyword>
<keyword id="KW-0813">Transport</keyword>
<keyword id="KW-0830">Ubiquinone</keyword>
<comment type="function">
    <text evidence="2">Component of the ubiquinol-cytochrome c reductase complex (complex III or cytochrome b-c1 complex) that is part of the mitochondrial respiratory chain. The b-c1 complex mediates electron transfer from ubiquinol to cytochrome c. Contributes to the generation of a proton gradient across the mitochondrial membrane that is then used for ATP synthesis.</text>
</comment>
<comment type="cofactor">
    <cofactor evidence="2">
        <name>heme b</name>
        <dbReference type="ChEBI" id="CHEBI:60344"/>
    </cofactor>
    <text evidence="2">Binds 2 heme b groups non-covalently.</text>
</comment>
<comment type="subunit">
    <text evidence="2">The cytochrome bc1 complex contains 11 subunits: 3 respiratory subunits (MT-CYB, CYC1 and UQCRFS1), 2 core proteins (UQCRC1 and UQCRC2) and 6 low-molecular weight proteins (UQCRH/QCR6, UQCRB/QCR7, UQCRQ/QCR8, UQCR10/QCR9, UQCR11/QCR10 and a cleavage product of UQCRFS1). This cytochrome bc1 complex then forms a dimer.</text>
</comment>
<comment type="subcellular location">
    <subcellularLocation>
        <location evidence="2">Mitochondrion inner membrane</location>
        <topology evidence="2">Multi-pass membrane protein</topology>
    </subcellularLocation>
</comment>
<comment type="miscellaneous">
    <text evidence="1">Heme 1 (or BL or b562) is low-potential and absorbs at about 562 nm, and heme 2 (or BH or b566) is high-potential and absorbs at about 566 nm.</text>
</comment>
<comment type="similarity">
    <text evidence="3 4">Belongs to the cytochrome b family.</text>
</comment>
<comment type="caution">
    <text evidence="2">The full-length protein contains only eight transmembrane helices, not nine as predicted by bioinformatics tools.</text>
</comment>
<gene>
    <name type="primary">MT-CYB</name>
    <name type="synonym">COB</name>
    <name type="synonym">CYTB</name>
    <name type="synonym">MTCYB</name>
</gene>